<reference key="1">
    <citation type="journal article" date="2003" name="Nat. Genet.">
        <title>Comparative analysis of the genome sequences of Bordetella pertussis, Bordetella parapertussis and Bordetella bronchiseptica.</title>
        <authorList>
            <person name="Parkhill J."/>
            <person name="Sebaihia M."/>
            <person name="Preston A."/>
            <person name="Murphy L.D."/>
            <person name="Thomson N.R."/>
            <person name="Harris D.E."/>
            <person name="Holden M.T.G."/>
            <person name="Churcher C.M."/>
            <person name="Bentley S.D."/>
            <person name="Mungall K.L."/>
            <person name="Cerdeno-Tarraga A.-M."/>
            <person name="Temple L."/>
            <person name="James K.D."/>
            <person name="Harris B."/>
            <person name="Quail M.A."/>
            <person name="Achtman M."/>
            <person name="Atkin R."/>
            <person name="Baker S."/>
            <person name="Basham D."/>
            <person name="Bason N."/>
            <person name="Cherevach I."/>
            <person name="Chillingworth T."/>
            <person name="Collins M."/>
            <person name="Cronin A."/>
            <person name="Davis P."/>
            <person name="Doggett J."/>
            <person name="Feltwell T."/>
            <person name="Goble A."/>
            <person name="Hamlin N."/>
            <person name="Hauser H."/>
            <person name="Holroyd S."/>
            <person name="Jagels K."/>
            <person name="Leather S."/>
            <person name="Moule S."/>
            <person name="Norberczak H."/>
            <person name="O'Neil S."/>
            <person name="Ormond D."/>
            <person name="Price C."/>
            <person name="Rabbinowitsch E."/>
            <person name="Rutter S."/>
            <person name="Sanders M."/>
            <person name="Saunders D."/>
            <person name="Seeger K."/>
            <person name="Sharp S."/>
            <person name="Simmonds M."/>
            <person name="Skelton J."/>
            <person name="Squares R."/>
            <person name="Squares S."/>
            <person name="Stevens K."/>
            <person name="Unwin L."/>
            <person name="Whitehead S."/>
            <person name="Barrell B.G."/>
            <person name="Maskell D.J."/>
        </authorList>
    </citation>
    <scope>NUCLEOTIDE SEQUENCE [LARGE SCALE GENOMIC DNA]</scope>
    <source>
        <strain>12822 / ATCC BAA-587 / NCTC 13253</strain>
    </source>
</reference>
<sequence length="308" mass="33698">MLTVQELVDDNADKIPFSWIAGHDAADRAIPDDGMAAADLVGHLNLIHPSRIQVFGQEELAYYTRFDLRRRMHHMDELLIGGVPAILLADGLTPPQDLIDQCAQHQVPLLSTPVAAAQLIDLLRIYLGKKLAPTTTVHGVFLDVLGLGVLITGESGLGKSELALELISRGHGLVADDAVELSRTAPGVIEGHCPQLLQNLLEVRGLGLLDIRTIFGETSVRRKMRLKLIVHLVRATAQDKFERLPLQDITQDMLGLPIRKVMLQVAAGRNLAVLVEAAVRNTILKLRGIDTLGEFMERQAMAILQSSK</sequence>
<protein>
    <recommendedName>
        <fullName evidence="1">HPr kinase/phosphorylase</fullName>
        <shortName evidence="1">HPrK/P</shortName>
        <ecNumber evidence="1">2.7.11.-</ecNumber>
        <ecNumber evidence="1">2.7.4.-</ecNumber>
    </recommendedName>
    <alternativeName>
        <fullName evidence="1">HPr(Ser) kinase/phosphorylase</fullName>
    </alternativeName>
</protein>
<proteinExistence type="inferred from homology"/>
<evidence type="ECO:0000255" key="1">
    <source>
        <dbReference type="HAMAP-Rule" id="MF_01249"/>
    </source>
</evidence>
<accession>Q7U370</accession>
<name>HPRK_BORPA</name>
<gene>
    <name evidence="1" type="primary">hprK</name>
    <name type="ordered locus">BPP4035</name>
</gene>
<dbReference type="EC" id="2.7.11.-" evidence="1"/>
<dbReference type="EC" id="2.7.4.-" evidence="1"/>
<dbReference type="EMBL" id="BX640435">
    <property type="protein sequence ID" value="CAE39318.1"/>
    <property type="molecule type" value="Genomic_DNA"/>
</dbReference>
<dbReference type="RefSeq" id="WP_003815180.1">
    <property type="nucleotide sequence ID" value="NC_002928.3"/>
</dbReference>
<dbReference type="SMR" id="Q7U370"/>
<dbReference type="GeneID" id="93205834"/>
<dbReference type="KEGG" id="bpa:BPP4035"/>
<dbReference type="HOGENOM" id="CLU_052030_0_2_4"/>
<dbReference type="Proteomes" id="UP000001421">
    <property type="component" value="Chromosome"/>
</dbReference>
<dbReference type="GO" id="GO:0005524">
    <property type="term" value="F:ATP binding"/>
    <property type="evidence" value="ECO:0007669"/>
    <property type="project" value="UniProtKB-UniRule"/>
</dbReference>
<dbReference type="GO" id="GO:0000287">
    <property type="term" value="F:magnesium ion binding"/>
    <property type="evidence" value="ECO:0007669"/>
    <property type="project" value="UniProtKB-UniRule"/>
</dbReference>
<dbReference type="GO" id="GO:0000155">
    <property type="term" value="F:phosphorelay sensor kinase activity"/>
    <property type="evidence" value="ECO:0007669"/>
    <property type="project" value="InterPro"/>
</dbReference>
<dbReference type="GO" id="GO:0004674">
    <property type="term" value="F:protein serine/threonine kinase activity"/>
    <property type="evidence" value="ECO:0007669"/>
    <property type="project" value="UniProtKB-KW"/>
</dbReference>
<dbReference type="GO" id="GO:0004712">
    <property type="term" value="F:protein serine/threonine/tyrosine kinase activity"/>
    <property type="evidence" value="ECO:0007669"/>
    <property type="project" value="UniProtKB-UniRule"/>
</dbReference>
<dbReference type="GO" id="GO:0006109">
    <property type="term" value="P:regulation of carbohydrate metabolic process"/>
    <property type="evidence" value="ECO:0007669"/>
    <property type="project" value="UniProtKB-UniRule"/>
</dbReference>
<dbReference type="CDD" id="cd01918">
    <property type="entry name" value="HprK_C"/>
    <property type="match status" value="1"/>
</dbReference>
<dbReference type="FunFam" id="3.40.50.300:FF:000174">
    <property type="entry name" value="HPr kinase/phosphorylase"/>
    <property type="match status" value="1"/>
</dbReference>
<dbReference type="Gene3D" id="3.40.1390.20">
    <property type="entry name" value="HprK N-terminal domain-like"/>
    <property type="match status" value="1"/>
</dbReference>
<dbReference type="Gene3D" id="3.40.50.300">
    <property type="entry name" value="P-loop containing nucleotide triphosphate hydrolases"/>
    <property type="match status" value="1"/>
</dbReference>
<dbReference type="HAMAP" id="MF_01249">
    <property type="entry name" value="HPr_kinase"/>
    <property type="match status" value="1"/>
</dbReference>
<dbReference type="InterPro" id="IPR003755">
    <property type="entry name" value="HPr(Ser)_kin/Pase"/>
</dbReference>
<dbReference type="InterPro" id="IPR011104">
    <property type="entry name" value="Hpr_kin/Pase_C"/>
</dbReference>
<dbReference type="InterPro" id="IPR011126">
    <property type="entry name" value="Hpr_kin/Pase_Hpr_N"/>
</dbReference>
<dbReference type="InterPro" id="IPR027417">
    <property type="entry name" value="P-loop_NTPase"/>
</dbReference>
<dbReference type="InterPro" id="IPR028979">
    <property type="entry name" value="Ser_kin/Pase_Hpr-like_N_sf"/>
</dbReference>
<dbReference type="NCBIfam" id="TIGR00679">
    <property type="entry name" value="hpr-ser"/>
    <property type="match status" value="1"/>
</dbReference>
<dbReference type="PANTHER" id="PTHR30305:SF1">
    <property type="entry name" value="HPR KINASE_PHOSPHORYLASE"/>
    <property type="match status" value="1"/>
</dbReference>
<dbReference type="PANTHER" id="PTHR30305">
    <property type="entry name" value="PROTEIN YJDM-RELATED"/>
    <property type="match status" value="1"/>
</dbReference>
<dbReference type="Pfam" id="PF07475">
    <property type="entry name" value="Hpr_kinase_C"/>
    <property type="match status" value="1"/>
</dbReference>
<dbReference type="Pfam" id="PF02603">
    <property type="entry name" value="Hpr_kinase_N"/>
    <property type="match status" value="1"/>
</dbReference>
<dbReference type="SUPFAM" id="SSF75138">
    <property type="entry name" value="HprK N-terminal domain-like"/>
    <property type="match status" value="1"/>
</dbReference>
<dbReference type="SUPFAM" id="SSF53795">
    <property type="entry name" value="PEP carboxykinase-like"/>
    <property type="match status" value="1"/>
</dbReference>
<organism>
    <name type="scientific">Bordetella parapertussis (strain 12822 / ATCC BAA-587 / NCTC 13253)</name>
    <dbReference type="NCBI Taxonomy" id="257311"/>
    <lineage>
        <taxon>Bacteria</taxon>
        <taxon>Pseudomonadati</taxon>
        <taxon>Pseudomonadota</taxon>
        <taxon>Betaproteobacteria</taxon>
        <taxon>Burkholderiales</taxon>
        <taxon>Alcaligenaceae</taxon>
        <taxon>Bordetella</taxon>
    </lineage>
</organism>
<feature type="chain" id="PRO_0000058948" description="HPr kinase/phosphorylase">
    <location>
        <begin position="1"/>
        <end position="308"/>
    </location>
</feature>
<feature type="region of interest" description="Important for the catalytic mechanism of both phosphorylation and dephosphorylation" evidence="1">
    <location>
        <begin position="201"/>
        <end position="210"/>
    </location>
</feature>
<feature type="region of interest" description="Important for the catalytic mechanism of dephosphorylation" evidence="1">
    <location>
        <begin position="264"/>
        <end position="269"/>
    </location>
</feature>
<feature type="active site" evidence="1">
    <location>
        <position position="138"/>
    </location>
</feature>
<feature type="active site" evidence="1">
    <location>
        <position position="159"/>
    </location>
</feature>
<feature type="active site" description="Proton acceptor; for phosphorylation activity. Proton donor; for dephosphorylation activity" evidence="1">
    <location>
        <position position="177"/>
    </location>
</feature>
<feature type="active site" evidence="1">
    <location>
        <position position="243"/>
    </location>
</feature>
<feature type="binding site" evidence="1">
    <location>
        <begin position="153"/>
        <end position="160"/>
    </location>
    <ligand>
        <name>ATP</name>
        <dbReference type="ChEBI" id="CHEBI:30616"/>
    </ligand>
</feature>
<feature type="binding site" evidence="1">
    <location>
        <position position="160"/>
    </location>
    <ligand>
        <name>Mg(2+)</name>
        <dbReference type="ChEBI" id="CHEBI:18420"/>
    </ligand>
</feature>
<feature type="binding site" evidence="1">
    <location>
        <position position="202"/>
    </location>
    <ligand>
        <name>Mg(2+)</name>
        <dbReference type="ChEBI" id="CHEBI:18420"/>
    </ligand>
</feature>
<keyword id="KW-0067">ATP-binding</keyword>
<keyword id="KW-0418">Kinase</keyword>
<keyword id="KW-0460">Magnesium</keyword>
<keyword id="KW-0479">Metal-binding</keyword>
<keyword id="KW-0511">Multifunctional enzyme</keyword>
<keyword id="KW-0547">Nucleotide-binding</keyword>
<keyword id="KW-0723">Serine/threonine-protein kinase</keyword>
<keyword id="KW-0808">Transferase</keyword>
<comment type="function">
    <text evidence="1">Catalyzes the ATP- as well as the pyrophosphate-dependent phosphorylation of a specific serine residue in HPr, a phosphocarrier protein of the phosphoenolpyruvate-dependent sugar phosphotransferase system (PTS). HprK/P also catalyzes the pyrophosphate-producing, inorganic phosphate-dependent dephosphorylation (phosphorolysis) of seryl-phosphorylated HPr (P-Ser-HPr).</text>
</comment>
<comment type="catalytic activity">
    <reaction evidence="1">
        <text>[HPr protein]-L-serine + ATP = [HPr protein]-O-phospho-L-serine + ADP + H(+)</text>
        <dbReference type="Rhea" id="RHEA:46600"/>
        <dbReference type="Rhea" id="RHEA-COMP:11602"/>
        <dbReference type="Rhea" id="RHEA-COMP:11603"/>
        <dbReference type="ChEBI" id="CHEBI:15378"/>
        <dbReference type="ChEBI" id="CHEBI:29999"/>
        <dbReference type="ChEBI" id="CHEBI:30616"/>
        <dbReference type="ChEBI" id="CHEBI:83421"/>
        <dbReference type="ChEBI" id="CHEBI:456216"/>
    </reaction>
</comment>
<comment type="catalytic activity">
    <reaction evidence="1">
        <text>[HPr protein]-O-phospho-L-serine + phosphate + H(+) = [HPr protein]-L-serine + diphosphate</text>
        <dbReference type="Rhea" id="RHEA:46604"/>
        <dbReference type="Rhea" id="RHEA-COMP:11602"/>
        <dbReference type="Rhea" id="RHEA-COMP:11603"/>
        <dbReference type="ChEBI" id="CHEBI:15378"/>
        <dbReference type="ChEBI" id="CHEBI:29999"/>
        <dbReference type="ChEBI" id="CHEBI:33019"/>
        <dbReference type="ChEBI" id="CHEBI:43474"/>
        <dbReference type="ChEBI" id="CHEBI:83421"/>
    </reaction>
</comment>
<comment type="cofactor">
    <cofactor evidence="1">
        <name>Mg(2+)</name>
        <dbReference type="ChEBI" id="CHEBI:18420"/>
    </cofactor>
</comment>
<comment type="subunit">
    <text evidence="1">Homohexamer.</text>
</comment>
<comment type="domain">
    <text evidence="1">The Walker A ATP-binding motif also binds Pi and PPi.</text>
</comment>
<comment type="miscellaneous">
    <text evidence="1">Both phosphorylation and phosphorolysis are carried out by the same active site and suggest a common mechanism for both reactions.</text>
</comment>
<comment type="similarity">
    <text evidence="1">Belongs to the HPrK/P family.</text>
</comment>